<reference key="1">
    <citation type="submission" date="1994-10" db="EMBL/GenBank/DDBJ databases">
        <authorList>
            <person name="Osmond B.C."/>
        </authorList>
    </citation>
    <scope>NUCLEOTIDE SEQUENCE [GENOMIC DNA]</scope>
</reference>
<reference key="2">
    <citation type="journal article" date="1995" name="Yeast">
        <title>A 37.5 kb region of yeast chromosome X includes the SME1, MEF2, GSH1 and CSD3 genes, a TCP-1-related gene, an open reading frame similar to the DAL80 gene, and a tRNA(Arg).</title>
        <authorList>
            <person name="Rasmussen S.W."/>
        </authorList>
    </citation>
    <scope>NUCLEOTIDE SEQUENCE [GENOMIC DNA]</scope>
    <source>
        <strain>ATCC 96604 / S288c / FY1679</strain>
    </source>
</reference>
<reference key="3">
    <citation type="journal article" date="1996" name="EMBO J.">
        <title>Complete nucleotide sequence of Saccharomyces cerevisiae chromosome X.</title>
        <authorList>
            <person name="Galibert F."/>
            <person name="Alexandraki D."/>
            <person name="Baur A."/>
            <person name="Boles E."/>
            <person name="Chalwatzis N."/>
            <person name="Chuat J.-C."/>
            <person name="Coster F."/>
            <person name="Cziepluch C."/>
            <person name="de Haan M."/>
            <person name="Domdey H."/>
            <person name="Durand P."/>
            <person name="Entian K.-D."/>
            <person name="Gatius M."/>
            <person name="Goffeau A."/>
            <person name="Grivell L.A."/>
            <person name="Hennemann A."/>
            <person name="Herbert C.J."/>
            <person name="Heumann K."/>
            <person name="Hilger F."/>
            <person name="Hollenberg C.P."/>
            <person name="Huang M.-E."/>
            <person name="Jacq C."/>
            <person name="Jauniaux J.-C."/>
            <person name="Katsoulou C."/>
            <person name="Kirchrath L."/>
            <person name="Kleine K."/>
            <person name="Kordes E."/>
            <person name="Koetter P."/>
            <person name="Liebl S."/>
            <person name="Louis E.J."/>
            <person name="Manus V."/>
            <person name="Mewes H.-W."/>
            <person name="Miosga T."/>
            <person name="Obermaier B."/>
            <person name="Perea J."/>
            <person name="Pohl T.M."/>
            <person name="Portetelle D."/>
            <person name="Pujol A."/>
            <person name="Purnelle B."/>
            <person name="Ramezani Rad M."/>
            <person name="Rasmussen S.W."/>
            <person name="Rose M."/>
            <person name="Rossau R."/>
            <person name="Schaaff-Gerstenschlaeger I."/>
            <person name="Smits P.H.M."/>
            <person name="Scarcez T."/>
            <person name="Soriano N."/>
            <person name="To Van D."/>
            <person name="Tzermia M."/>
            <person name="Van Broekhoven A."/>
            <person name="Vandenbol M."/>
            <person name="Wedler H."/>
            <person name="von Wettstein D."/>
            <person name="Wambutt R."/>
            <person name="Zagulski M."/>
            <person name="Zollner A."/>
            <person name="Karpfinger-Hartl L."/>
        </authorList>
    </citation>
    <scope>NUCLEOTIDE SEQUENCE [LARGE SCALE GENOMIC DNA]</scope>
    <source>
        <strain>ATCC 204508 / S288c</strain>
    </source>
</reference>
<reference key="4">
    <citation type="journal article" date="2014" name="G3 (Bethesda)">
        <title>The reference genome sequence of Saccharomyces cerevisiae: Then and now.</title>
        <authorList>
            <person name="Engel S.R."/>
            <person name="Dietrich F.S."/>
            <person name="Fisk D.G."/>
            <person name="Binkley G."/>
            <person name="Balakrishnan R."/>
            <person name="Costanzo M.C."/>
            <person name="Dwight S.S."/>
            <person name="Hitz B.C."/>
            <person name="Karra K."/>
            <person name="Nash R.S."/>
            <person name="Weng S."/>
            <person name="Wong E.D."/>
            <person name="Lloyd P."/>
            <person name="Skrzypek M.S."/>
            <person name="Miyasato S.R."/>
            <person name="Simison M."/>
            <person name="Cherry J.M."/>
        </authorList>
    </citation>
    <scope>GENOME REANNOTATION</scope>
    <source>
        <strain>ATCC 204508 / S288c</strain>
    </source>
</reference>
<reference key="5">
    <citation type="journal article" date="1992" name="Mol. Cell. Biol.">
        <title>CSD2, CSD3, and CSD4, genes required for chitin synthesis in Saccharomyces cerevisiae: the CSD2 gene product is related to chitin synthases and to developmentally regulated proteins in Rhizobium species and Xenopus laevis.</title>
        <authorList>
            <person name="Bulawa C.E."/>
        </authorList>
    </citation>
    <scope>FUNCTION</scope>
</reference>
<reference key="6">
    <citation type="journal article" date="1998" name="Mol. Biol. Cell">
        <title>Chs6p-dependent anterograde transport of Chs3p from the chitosome to the plasma membrane in Saccharomyces cerevisiae.</title>
        <authorList>
            <person name="Ziman M."/>
            <person name="Chuang J.S."/>
            <person name="Tsung M."/>
            <person name="Hamamoto S."/>
            <person name="Schekman R."/>
        </authorList>
    </citation>
    <scope>FUNCTION</scope>
    <scope>SUBCELLULAR LOCATION</scope>
</reference>
<reference key="7">
    <citation type="journal article" date="2003" name="Nature">
        <title>Global analysis of protein localization in budding yeast.</title>
        <authorList>
            <person name="Huh W.-K."/>
            <person name="Falvo J.V."/>
            <person name="Gerke L.C."/>
            <person name="Carroll A.S."/>
            <person name="Howson R.W."/>
            <person name="Weissman J.S."/>
            <person name="O'Shea E.K."/>
        </authorList>
    </citation>
    <scope>SUBCELLULAR LOCATION [LARGE SCALE ANALYSIS]</scope>
</reference>
<reference key="8">
    <citation type="journal article" date="2003" name="Nature">
        <title>Global analysis of protein expression in yeast.</title>
        <authorList>
            <person name="Ghaemmaghami S."/>
            <person name="Huh W.-K."/>
            <person name="Bower K."/>
            <person name="Howson R.W."/>
            <person name="Belle A."/>
            <person name="Dephoure N."/>
            <person name="O'Shea E.K."/>
            <person name="Weissman J.S."/>
        </authorList>
    </citation>
    <scope>LEVEL OF PROTEIN EXPRESSION [LARGE SCALE ANALYSIS]</scope>
</reference>
<reference key="9">
    <citation type="journal article" date="2005" name="BMC Genet.">
        <title>An interactional network of genes involved in chitin synthesis in Saccharomyces cerevisiae.</title>
        <authorList>
            <person name="Lesage G."/>
            <person name="Shapiro J."/>
            <person name="Specht C.A."/>
            <person name="Sdicu A.-M."/>
            <person name="Menard P."/>
            <person name="Hussein S."/>
            <person name="Tong A.H.Y."/>
            <person name="Boone C."/>
            <person name="Bussey H."/>
        </authorList>
    </citation>
    <scope>FUNCTION</scope>
</reference>
<reference key="10">
    <citation type="journal article" date="2006" name="EMBO J.">
        <title>Arf1p, Chs5p and the ChAPs are required for export of specialized cargo from the Golgi.</title>
        <authorList>
            <person name="Trautwein M."/>
            <person name="Schindler C."/>
            <person name="Gauss R."/>
            <person name="Dengjel J."/>
            <person name="Hartmann E."/>
            <person name="Spang A."/>
        </authorList>
    </citation>
    <scope>FUNCTION</scope>
    <scope>SUBCELLULAR LOCATION</scope>
    <scope>INTERACTION WITH ARF1; BCH1; BCH2; BUD7; CHS3 AND CHS5</scope>
    <scope>DOMAIN</scope>
</reference>
<reference key="11">
    <citation type="journal article" date="2006" name="J. Cell Biol.">
        <title>Palmitoylation by the DHHC protein Pfa4 regulates the ER exit of Chs3.</title>
        <authorList>
            <person name="Lam K.K.Y."/>
            <person name="Davey M."/>
            <person name="Sun B."/>
            <person name="Roth A.F."/>
            <person name="Davis N.G."/>
            <person name="Conibear E."/>
        </authorList>
    </citation>
    <scope>FUNCTION</scope>
</reference>
<reference key="12">
    <citation type="journal article" date="2006" name="J. Cell Biol.">
        <title>Exomer: a coat complex for transport of select membrane proteins from the trans-Golgi network to the plasma membrane in yeast.</title>
        <authorList>
            <person name="Wang C.-W."/>
            <person name="Hamamoto S."/>
            <person name="Orci L."/>
            <person name="Schekman R."/>
        </authorList>
    </citation>
    <scope>FUNCTION</scope>
    <scope>IDENTIFICATION IN THE CHS5/6 COMPLEX</scope>
    <scope>INTERACTION WITH ARF1</scope>
    <scope>SUBCELLULAR LOCATION</scope>
</reference>
<reference key="13">
    <citation type="journal article" date="2006" name="Mol. Biol. Cell">
        <title>Chs5/6 complex: a multiprotein complex that interacts with and conveys chitin synthase III from the trans-Golgi network to the cell surface.</title>
        <authorList>
            <person name="Sanchatjate S."/>
            <person name="Schekman R."/>
        </authorList>
    </citation>
    <scope>FUNCTION</scope>
    <scope>IDENTIFICATION IN THE CHS5/6 COMPLEX</scope>
    <scope>INTERACTION WITH CHS3</scope>
</reference>
<reference key="14">
    <citation type="journal article" date="2017" name="Int. J. Mol. Sci.">
        <title>In Vitro and In Vivo Studies on the Structural Organization of Chs3 from Saccharomyces cerevisiae.</title>
        <authorList>
            <person name="Gohlke S."/>
            <person name="Muthukrishnan S."/>
            <person name="Merzendorfer H."/>
        </authorList>
    </citation>
    <scope>DISRUPTION PHENOTYPE</scope>
</reference>
<name>CHS6_YEAST</name>
<gene>
    <name type="primary">CHS6</name>
    <name type="synonym">CSD3</name>
    <name type="ordered locus">YJL099W</name>
    <name type="ORF">J0838</name>
</gene>
<organism>
    <name type="scientific">Saccharomyces cerevisiae (strain ATCC 204508 / S288c)</name>
    <name type="common">Baker's yeast</name>
    <dbReference type="NCBI Taxonomy" id="559292"/>
    <lineage>
        <taxon>Eukaryota</taxon>
        <taxon>Fungi</taxon>
        <taxon>Dikarya</taxon>
        <taxon>Ascomycota</taxon>
        <taxon>Saccharomycotina</taxon>
        <taxon>Saccharomycetes</taxon>
        <taxon>Saccharomycetales</taxon>
        <taxon>Saccharomycetaceae</taxon>
        <taxon>Saccharomyces</taxon>
    </lineage>
</organism>
<comment type="function">
    <text evidence="4 5 6 7 8 9 11">Member of the CHS5-ARF1P-binding proteins (CHAPS) which mediates export of specific cargo proteins, including chitin synthase CHS3.</text>
</comment>
<comment type="subunit">
    <text evidence="6 8 9">Component of the CHS5/6 complex composed of the 4 CHAPS proteins BCH1, BCH2, BUD7, and CHS6 as well as at least CHS5 and GTP-bound ARF1. The complex interacts with the cargo protein CHS3.</text>
</comment>
<comment type="interaction">
    <interactant intactId="EBI-4649">
        <id>P40955</id>
    </interactant>
    <interactant intactId="EBI-2816">
        <id>P11076</id>
        <label>ARF1</label>
    </interactant>
    <organismsDiffer>false</organismsDiffer>
    <experiments>3</experiments>
</comment>
<comment type="interaction">
    <interactant intactId="EBI-4649">
        <id>P40955</id>
    </interactant>
    <interactant intactId="EBI-27508">
        <id>Q05029</id>
        <label>BCH1</label>
    </interactant>
    <organismsDiffer>false</organismsDiffer>
    <experiments>6</experiments>
</comment>
<comment type="interaction">
    <interactant intactId="EBI-4649">
        <id>P40955</id>
    </interactant>
    <interactant intactId="EBI-32770">
        <id>Q08754</id>
        <label>BUD7</label>
    </interactant>
    <organismsDiffer>false</organismsDiffer>
    <experiments>2</experiments>
</comment>
<comment type="interaction">
    <interactant intactId="EBI-4649">
        <id>P40955</id>
    </interactant>
    <interactant intactId="EBI-4640">
        <id>Q12114</id>
        <label>CHS5</label>
    </interactant>
    <organismsDiffer>false</organismsDiffer>
    <experiments>18</experiments>
</comment>
<comment type="subcellular location">
    <subcellularLocation>
        <location evidence="2 6 9 11">Golgi apparatus</location>
        <location evidence="2 6 9 11">trans-Golgi network membrane</location>
        <topology evidence="2 6 9 11">Peripheral membrane protein</topology>
    </subcellularLocation>
    <text>Trans-Golgi network location requires interaction with CHS5 and with myristoylated GTP-bound ARF1 for the recruitment to the membranes.</text>
</comment>
<comment type="disruption phenotype">
    <text evidence="10">Abolishes CHS3 localization to the bud neck and plasma membrane, with increased protein localization to the trans-Golgi cisternae.</text>
</comment>
<comment type="miscellaneous">
    <text evidence="3">Present with 1180 molecules/cell in log phase SD medium.</text>
</comment>
<comment type="similarity">
    <text evidence="12">Belongs to the CHAPS family.</text>
</comment>
<sequence>MNLFWPSETKKQNEIPGGDYTPGNSPSVQKGYQFLNRDIFKSCPRIMERQFGECLHNRTHLIKDLISSGNVGLGPIEIVHMSYLNKHEKEEFGEYFYVTGIEVSGPAMPVEFLEVLKSSKRISKNISNNIILTYCCFNFFSNLDIRIRYDADDTFQTTAIDCNKETTDLTMTEKMWEETFASSVIRAIITNTNPELKPPGLVECPFYVGKDTISSCKKIIELLCRFLPRSLNCGWDSTKSMQATIVNNYLMYSLKSFIAITPSLVDFTIDYLKGLTKKDPIHDIYYKTAMITILDHIETKELDMITILNETLDPLLSLLNDLPPRDADSARLMNCMSDLLNIQTNFLLNRGDYELALGVSNTSTELALDSFESWYNLARCHIKKEEYEKALFAINSMPRLRKNDGHLETMYSRFLTSNYYKKPLNGTREHYDLTAMEFTNLSGTLRNWKEDELKRQIFGRIAMINEKKIGYTKEIWDDIAIKLGPICGPQSVNLINYVSPQEVKNIKNINLIARNTIGKQLGWFSGKIYGLLMEIVNKIGWNGLLNIRTEAFMMETEFYQASNNIIDENGHIPMESRKKRFCEGWLDDLFLDLYQDLKLSKISLSNKDEKHSGLEWELLGLIMLRTWHWEDAVACLRTSIVARFDPVSCQQLLKIYLQPPKNIQEVTLLDTDTIISLLIKKISYDCRYYNYCQIFNLQLLEKLCNELGTHILRNKILLQPSIGDEIMVMIDAMLAWIADLDHTVQP</sequence>
<dbReference type="EMBL" id="U15603">
    <property type="protein sequence ID" value="AAA50840.1"/>
    <property type="molecule type" value="Genomic_DNA"/>
</dbReference>
<dbReference type="EMBL" id="X85021">
    <property type="protein sequence ID" value="CAA59395.1"/>
    <property type="molecule type" value="Genomic_DNA"/>
</dbReference>
<dbReference type="EMBL" id="Z49374">
    <property type="protein sequence ID" value="CAA89394.1"/>
    <property type="molecule type" value="Genomic_DNA"/>
</dbReference>
<dbReference type="EMBL" id="Z49373">
    <property type="protein sequence ID" value="CAA89393.1"/>
    <property type="molecule type" value="Genomic_DNA"/>
</dbReference>
<dbReference type="EMBL" id="BK006943">
    <property type="protein sequence ID" value="DAA08701.1"/>
    <property type="molecule type" value="Genomic_DNA"/>
</dbReference>
<dbReference type="PIR" id="S50226">
    <property type="entry name" value="S50226"/>
</dbReference>
<dbReference type="RefSeq" id="NP_012436.1">
    <property type="nucleotide sequence ID" value="NM_001181532.1"/>
</dbReference>
<dbReference type="PDB" id="4WJW">
    <property type="method" value="X-ray"/>
    <property type="resolution" value="2.59 A"/>
    <property type="chains" value="B=1-746"/>
</dbReference>
<dbReference type="PDB" id="4YG8">
    <property type="method" value="X-ray"/>
    <property type="resolution" value="2.75 A"/>
    <property type="chains" value="B=1-746"/>
</dbReference>
<dbReference type="PDBsum" id="4WJW"/>
<dbReference type="PDBsum" id="4YG8"/>
<dbReference type="SMR" id="P40955"/>
<dbReference type="BioGRID" id="33658">
    <property type="interactions" value="239"/>
</dbReference>
<dbReference type="ComplexPortal" id="CPX-1719">
    <property type="entry name" value="Exomer complex"/>
</dbReference>
<dbReference type="DIP" id="DIP-5682N"/>
<dbReference type="FunCoup" id="P40955">
    <property type="interactions" value="67"/>
</dbReference>
<dbReference type="IntAct" id="P40955">
    <property type="interactions" value="14"/>
</dbReference>
<dbReference type="MINT" id="P40955"/>
<dbReference type="STRING" id="4932.YJL099W"/>
<dbReference type="GlyGen" id="P40955">
    <property type="glycosylation" value="1 site"/>
</dbReference>
<dbReference type="iPTMnet" id="P40955"/>
<dbReference type="PaxDb" id="4932-YJL099W"/>
<dbReference type="PeptideAtlas" id="P40955"/>
<dbReference type="EnsemblFungi" id="YJL099W_mRNA">
    <property type="protein sequence ID" value="YJL099W"/>
    <property type="gene ID" value="YJL099W"/>
</dbReference>
<dbReference type="GeneID" id="853346"/>
<dbReference type="KEGG" id="sce:YJL099W"/>
<dbReference type="AGR" id="SGD:S000003635"/>
<dbReference type="SGD" id="S000003635">
    <property type="gene designation" value="CHS6"/>
</dbReference>
<dbReference type="VEuPathDB" id="FungiDB:YJL099W"/>
<dbReference type="eggNOG" id="ENOG502QRF3">
    <property type="taxonomic scope" value="Eukaryota"/>
</dbReference>
<dbReference type="GeneTree" id="ENSGT00940000176338"/>
<dbReference type="HOGENOM" id="CLU_019711_0_0_1"/>
<dbReference type="InParanoid" id="P40955"/>
<dbReference type="OMA" id="SCNLINF"/>
<dbReference type="OrthoDB" id="434695at2759"/>
<dbReference type="BioCyc" id="YEAST:G3O-31554-MONOMER"/>
<dbReference type="BioGRID-ORCS" id="853346">
    <property type="hits" value="3 hits in 10 CRISPR screens"/>
</dbReference>
<dbReference type="EvolutionaryTrace" id="P40955"/>
<dbReference type="PRO" id="PR:P40955"/>
<dbReference type="Proteomes" id="UP000002311">
    <property type="component" value="Chromosome X"/>
</dbReference>
<dbReference type="RNAct" id="P40955">
    <property type="molecule type" value="protein"/>
</dbReference>
<dbReference type="GO" id="GO:0005829">
    <property type="term" value="C:cytosol"/>
    <property type="evidence" value="ECO:0007005"/>
    <property type="project" value="SGD"/>
</dbReference>
<dbReference type="GO" id="GO:0034044">
    <property type="term" value="C:exomer complex"/>
    <property type="evidence" value="ECO:0000314"/>
    <property type="project" value="SGD"/>
</dbReference>
<dbReference type="GO" id="GO:0016020">
    <property type="term" value="C:membrane"/>
    <property type="evidence" value="ECO:0007669"/>
    <property type="project" value="UniProtKB-KW"/>
</dbReference>
<dbReference type="GO" id="GO:0030140">
    <property type="term" value="C:trans-Golgi network transport vesicle"/>
    <property type="evidence" value="ECO:0000314"/>
    <property type="project" value="SGD"/>
</dbReference>
<dbReference type="GO" id="GO:0006031">
    <property type="term" value="P:chitin biosynthetic process"/>
    <property type="evidence" value="ECO:0000315"/>
    <property type="project" value="SGD"/>
</dbReference>
<dbReference type="GO" id="GO:0006893">
    <property type="term" value="P:Golgi to plasma membrane transport"/>
    <property type="evidence" value="ECO:0000315"/>
    <property type="project" value="SGD"/>
</dbReference>
<dbReference type="GO" id="GO:0015031">
    <property type="term" value="P:protein transport"/>
    <property type="evidence" value="ECO:0000303"/>
    <property type="project" value="ComplexPortal"/>
</dbReference>
<dbReference type="Gene3D" id="1.25.40.10">
    <property type="entry name" value="Tetratricopeptide repeat domain"/>
    <property type="match status" value="1"/>
</dbReference>
<dbReference type="InterPro" id="IPR015374">
    <property type="entry name" value="ChAPs"/>
</dbReference>
<dbReference type="InterPro" id="IPR011990">
    <property type="entry name" value="TPR-like_helical_dom_sf"/>
</dbReference>
<dbReference type="PANTHER" id="PTHR31975">
    <property type="entry name" value="BUD SITE SELECTION PROTEIN 7-RELATED"/>
    <property type="match status" value="1"/>
</dbReference>
<dbReference type="PANTHER" id="PTHR31975:SF2">
    <property type="entry name" value="CHITIN BIOSYNTHESIS PROTEIN CHS6-RELATED"/>
    <property type="match status" value="1"/>
</dbReference>
<dbReference type="Pfam" id="PF09295">
    <property type="entry name" value="ChAPs"/>
    <property type="match status" value="2"/>
</dbReference>
<dbReference type="SUPFAM" id="SSF48452">
    <property type="entry name" value="TPR-like"/>
    <property type="match status" value="1"/>
</dbReference>
<dbReference type="PROSITE" id="PS50293">
    <property type="entry name" value="TPR_REGION"/>
    <property type="match status" value="1"/>
</dbReference>
<accession>P40955</accession>
<accession>D6VW85</accession>
<keyword id="KW-0002">3D-structure</keyword>
<keyword id="KW-0333">Golgi apparatus</keyword>
<keyword id="KW-0472">Membrane</keyword>
<keyword id="KW-0653">Protein transport</keyword>
<keyword id="KW-1185">Reference proteome</keyword>
<keyword id="KW-0813">Transport</keyword>
<proteinExistence type="evidence at protein level"/>
<feature type="chain" id="PRO_0000089662" description="Chitin biosynthesis protein CHS6">
    <location>
        <begin position="1"/>
        <end position="746"/>
    </location>
</feature>
<feature type="region of interest" description="Disordered" evidence="1">
    <location>
        <begin position="1"/>
        <end position="25"/>
    </location>
</feature>
<feature type="region of interest" description="CHS5-binding">
    <location>
        <begin position="734"/>
        <end position="746"/>
    </location>
</feature>
<feature type="helix" evidence="13">
    <location>
        <begin position="32"/>
        <end position="40"/>
    </location>
</feature>
<feature type="strand" evidence="13">
    <location>
        <begin position="45"/>
        <end position="47"/>
    </location>
</feature>
<feature type="helix" evidence="13">
    <location>
        <begin position="53"/>
        <end position="66"/>
    </location>
</feature>
<feature type="strand" evidence="13">
    <location>
        <begin position="77"/>
        <end position="88"/>
    </location>
</feature>
<feature type="strand" evidence="13">
    <location>
        <begin position="91"/>
        <end position="99"/>
    </location>
</feature>
<feature type="strand" evidence="13">
    <location>
        <begin position="104"/>
        <end position="106"/>
    </location>
</feature>
<feature type="helix" evidence="13">
    <location>
        <begin position="107"/>
        <end position="118"/>
    </location>
</feature>
<feature type="strand" evidence="13">
    <location>
        <begin position="131"/>
        <end position="138"/>
    </location>
</feature>
<feature type="turn" evidence="13">
    <location>
        <begin position="139"/>
        <end position="142"/>
    </location>
</feature>
<feature type="strand" evidence="13">
    <location>
        <begin position="143"/>
        <end position="149"/>
    </location>
</feature>
<feature type="strand" evidence="13">
    <location>
        <begin position="155"/>
        <end position="164"/>
    </location>
</feature>
<feature type="helix" evidence="13">
    <location>
        <begin position="173"/>
        <end position="191"/>
    </location>
</feature>
<feature type="helix" evidence="13">
    <location>
        <begin position="194"/>
        <end position="196"/>
    </location>
</feature>
<feature type="helix" evidence="13">
    <location>
        <begin position="212"/>
        <end position="225"/>
    </location>
</feature>
<feature type="helix" evidence="13">
    <location>
        <begin position="227"/>
        <end position="232"/>
    </location>
</feature>
<feature type="turn" evidence="13">
    <location>
        <begin position="237"/>
        <end position="239"/>
    </location>
</feature>
<feature type="strand" evidence="13">
    <location>
        <begin position="245"/>
        <end position="248"/>
    </location>
</feature>
<feature type="helix" evidence="13">
    <location>
        <begin position="249"/>
        <end position="258"/>
    </location>
</feature>
<feature type="helix" evidence="13">
    <location>
        <begin position="262"/>
        <end position="264"/>
    </location>
</feature>
<feature type="helix" evidence="13">
    <location>
        <begin position="265"/>
        <end position="278"/>
    </location>
</feature>
<feature type="helix" evidence="13">
    <location>
        <begin position="280"/>
        <end position="282"/>
    </location>
</feature>
<feature type="helix" evidence="13">
    <location>
        <begin position="283"/>
        <end position="294"/>
    </location>
</feature>
<feature type="helix" evidence="13">
    <location>
        <begin position="298"/>
        <end position="300"/>
    </location>
</feature>
<feature type="helix" evidence="13">
    <location>
        <begin position="301"/>
        <end position="312"/>
    </location>
</feature>
<feature type="helix" evidence="13">
    <location>
        <begin position="315"/>
        <end position="317"/>
    </location>
</feature>
<feature type="strand" evidence="13">
    <location>
        <begin position="319"/>
        <end position="321"/>
    </location>
</feature>
<feature type="helix" evidence="13">
    <location>
        <begin position="327"/>
        <end position="349"/>
    </location>
</feature>
<feature type="helix" evidence="13">
    <location>
        <begin position="353"/>
        <end position="366"/>
    </location>
</feature>
<feature type="helix" evidence="13">
    <location>
        <begin position="371"/>
        <end position="383"/>
    </location>
</feature>
<feature type="helix" evidence="13">
    <location>
        <begin position="387"/>
        <end position="395"/>
    </location>
</feature>
<feature type="turn" evidence="13">
    <location>
        <begin position="424"/>
        <end position="427"/>
    </location>
</feature>
<feature type="helix" evidence="13">
    <location>
        <begin position="435"/>
        <end position="444"/>
    </location>
</feature>
<feature type="helix" evidence="13">
    <location>
        <begin position="450"/>
        <end position="455"/>
    </location>
</feature>
<feature type="strand" evidence="13">
    <location>
        <begin position="459"/>
        <end position="462"/>
    </location>
</feature>
<feature type="helix" evidence="13">
    <location>
        <begin position="473"/>
        <end position="476"/>
    </location>
</feature>
<feature type="turn" evidence="13">
    <location>
        <begin position="477"/>
        <end position="481"/>
    </location>
</feature>
<feature type="helix" evidence="13">
    <location>
        <begin position="489"/>
        <end position="492"/>
    </location>
</feature>
<feature type="turn" evidence="13">
    <location>
        <begin position="495"/>
        <end position="497"/>
    </location>
</feature>
<feature type="helix" evidence="13">
    <location>
        <begin position="500"/>
        <end position="504"/>
    </location>
</feature>
<feature type="helix" evidence="13">
    <location>
        <begin position="509"/>
        <end position="513"/>
    </location>
</feature>
<feature type="strand" evidence="13">
    <location>
        <begin position="517"/>
        <end position="519"/>
    </location>
</feature>
<feature type="helix" evidence="13">
    <location>
        <begin position="522"/>
        <end position="552"/>
    </location>
</feature>
<feature type="helix" evidence="13">
    <location>
        <begin position="585"/>
        <end position="599"/>
    </location>
</feature>
<feature type="strand" evidence="14">
    <location>
        <begin position="605"/>
        <end position="608"/>
    </location>
</feature>
<feature type="helix" evidence="13">
    <location>
        <begin position="613"/>
        <end position="625"/>
    </location>
</feature>
<feature type="helix" evidence="13">
    <location>
        <begin position="629"/>
        <end position="642"/>
    </location>
</feature>
<feature type="helix" evidence="13">
    <location>
        <begin position="646"/>
        <end position="657"/>
    </location>
</feature>
<feature type="strand" evidence="13">
    <location>
        <begin position="663"/>
        <end position="665"/>
    </location>
</feature>
<feature type="helix" evidence="13">
    <location>
        <begin position="671"/>
        <end position="687"/>
    </location>
</feature>
<feature type="helix" evidence="13">
    <location>
        <begin position="694"/>
        <end position="707"/>
    </location>
</feature>
<feature type="helix" evidence="13">
    <location>
        <begin position="709"/>
        <end position="718"/>
    </location>
</feature>
<feature type="helix" evidence="13">
    <location>
        <begin position="724"/>
        <end position="740"/>
    </location>
</feature>
<evidence type="ECO:0000256" key="1">
    <source>
        <dbReference type="SAM" id="MobiDB-lite"/>
    </source>
</evidence>
<evidence type="ECO:0000269" key="2">
    <source>
    </source>
</evidence>
<evidence type="ECO:0000269" key="3">
    <source>
    </source>
</evidence>
<evidence type="ECO:0000269" key="4">
    <source>
    </source>
</evidence>
<evidence type="ECO:0000269" key="5">
    <source>
    </source>
</evidence>
<evidence type="ECO:0000269" key="6">
    <source>
    </source>
</evidence>
<evidence type="ECO:0000269" key="7">
    <source>
    </source>
</evidence>
<evidence type="ECO:0000269" key="8">
    <source>
    </source>
</evidence>
<evidence type="ECO:0000269" key="9">
    <source>
    </source>
</evidence>
<evidence type="ECO:0000269" key="10">
    <source>
    </source>
</evidence>
<evidence type="ECO:0000269" key="11">
    <source>
    </source>
</evidence>
<evidence type="ECO:0000305" key="12"/>
<evidence type="ECO:0007829" key="13">
    <source>
        <dbReference type="PDB" id="4WJW"/>
    </source>
</evidence>
<evidence type="ECO:0007829" key="14">
    <source>
        <dbReference type="PDB" id="4YG8"/>
    </source>
</evidence>
<protein>
    <recommendedName>
        <fullName>Chitin biosynthesis protein CHS6</fullName>
    </recommendedName>
    <alternativeName>
        <fullName>Protein CSD3</fullName>
    </alternativeName>
</protein>